<feature type="chain" id="PRO_1000199879" description="Urease subunit gamma">
    <location>
        <begin position="1"/>
        <end position="100"/>
    </location>
</feature>
<proteinExistence type="inferred from homology"/>
<comment type="catalytic activity">
    <reaction evidence="1">
        <text>urea + 2 H2O + H(+) = hydrogencarbonate + 2 NH4(+)</text>
        <dbReference type="Rhea" id="RHEA:20557"/>
        <dbReference type="ChEBI" id="CHEBI:15377"/>
        <dbReference type="ChEBI" id="CHEBI:15378"/>
        <dbReference type="ChEBI" id="CHEBI:16199"/>
        <dbReference type="ChEBI" id="CHEBI:17544"/>
        <dbReference type="ChEBI" id="CHEBI:28938"/>
        <dbReference type="EC" id="3.5.1.5"/>
    </reaction>
</comment>
<comment type="pathway">
    <text evidence="1">Nitrogen metabolism; urea degradation; CO(2) and NH(3) from urea (urease route): step 1/1.</text>
</comment>
<comment type="subunit">
    <text evidence="1">Heterotrimer of UreA (gamma), UreB (beta) and UreC (alpha) subunits. Three heterotrimers associate to form the active enzyme.</text>
</comment>
<comment type="subcellular location">
    <subcellularLocation>
        <location evidence="1">Cytoplasm</location>
    </subcellularLocation>
</comment>
<comment type="similarity">
    <text evidence="1">Belongs to the urease gamma subunit family.</text>
</comment>
<evidence type="ECO:0000255" key="1">
    <source>
        <dbReference type="HAMAP-Rule" id="MF_00739"/>
    </source>
</evidence>
<protein>
    <recommendedName>
        <fullName evidence="1">Urease subunit gamma</fullName>
        <ecNumber evidence="1">3.5.1.5</ecNumber>
    </recommendedName>
    <alternativeName>
        <fullName evidence="1">Urea amidohydrolase subunit gamma</fullName>
    </alternativeName>
</protein>
<reference key="1">
    <citation type="journal article" date="2010" name="Stand. Genomic Sci.">
        <title>Complete genome sequence of Rhizobium leguminosarum bv trifolii strain WSM2304, an effective microsymbiont of the South American clover Trifolium polymorphum.</title>
        <authorList>
            <person name="Reeve W."/>
            <person name="O'Hara G."/>
            <person name="Chain P."/>
            <person name="Ardley J."/>
            <person name="Brau L."/>
            <person name="Nandesena K."/>
            <person name="Tiwari R."/>
            <person name="Malfatti S."/>
            <person name="Kiss H."/>
            <person name="Lapidus A."/>
            <person name="Copeland A."/>
            <person name="Nolan M."/>
            <person name="Land M."/>
            <person name="Ivanova N."/>
            <person name="Mavromatis K."/>
            <person name="Markowitz V."/>
            <person name="Kyrpides N."/>
            <person name="Melino V."/>
            <person name="Denton M."/>
            <person name="Yates R."/>
            <person name="Howieson J."/>
        </authorList>
    </citation>
    <scope>NUCLEOTIDE SEQUENCE [LARGE SCALE GENOMIC DNA]</scope>
    <source>
        <strain>WSM2304</strain>
    </source>
</reference>
<organism>
    <name type="scientific">Rhizobium leguminosarum bv. trifolii (strain WSM2304)</name>
    <dbReference type="NCBI Taxonomy" id="395492"/>
    <lineage>
        <taxon>Bacteria</taxon>
        <taxon>Pseudomonadati</taxon>
        <taxon>Pseudomonadota</taxon>
        <taxon>Alphaproteobacteria</taxon>
        <taxon>Hyphomicrobiales</taxon>
        <taxon>Rhizobiaceae</taxon>
        <taxon>Rhizobium/Agrobacterium group</taxon>
        <taxon>Rhizobium</taxon>
    </lineage>
</organism>
<keyword id="KW-0963">Cytoplasm</keyword>
<keyword id="KW-0378">Hydrolase</keyword>
<keyword id="KW-1185">Reference proteome</keyword>
<name>URE3_RHILW</name>
<gene>
    <name evidence="1" type="primary">ureA</name>
    <name type="ordered locus">Rleg2_3056</name>
</gene>
<accession>B5ZMP5</accession>
<sequence length="100" mass="11092">MNLTPREKDKLLISMAAMVARRRLERGVKLNYPEAIALISDFVVEGARDGRPVAELMEAGAHVIGRDQVMEGIAEMIHDVQVEATFPDGTKLVTVHEPIR</sequence>
<dbReference type="EC" id="3.5.1.5" evidence="1"/>
<dbReference type="EMBL" id="CP001191">
    <property type="protein sequence ID" value="ACI56323.1"/>
    <property type="molecule type" value="Genomic_DNA"/>
</dbReference>
<dbReference type="RefSeq" id="WP_003561955.1">
    <property type="nucleotide sequence ID" value="NC_011369.1"/>
</dbReference>
<dbReference type="SMR" id="B5ZMP5"/>
<dbReference type="STRING" id="395492.Rleg2_3056"/>
<dbReference type="KEGG" id="rlt:Rleg2_3056"/>
<dbReference type="eggNOG" id="COG0831">
    <property type="taxonomic scope" value="Bacteria"/>
</dbReference>
<dbReference type="HOGENOM" id="CLU_145825_1_0_5"/>
<dbReference type="UniPathway" id="UPA00258">
    <property type="reaction ID" value="UER00370"/>
</dbReference>
<dbReference type="Proteomes" id="UP000008330">
    <property type="component" value="Chromosome"/>
</dbReference>
<dbReference type="GO" id="GO:0005737">
    <property type="term" value="C:cytoplasm"/>
    <property type="evidence" value="ECO:0007669"/>
    <property type="project" value="UniProtKB-SubCell"/>
</dbReference>
<dbReference type="GO" id="GO:0016151">
    <property type="term" value="F:nickel cation binding"/>
    <property type="evidence" value="ECO:0007669"/>
    <property type="project" value="InterPro"/>
</dbReference>
<dbReference type="GO" id="GO:0009039">
    <property type="term" value="F:urease activity"/>
    <property type="evidence" value="ECO:0007669"/>
    <property type="project" value="UniProtKB-UniRule"/>
</dbReference>
<dbReference type="GO" id="GO:0043419">
    <property type="term" value="P:urea catabolic process"/>
    <property type="evidence" value="ECO:0007669"/>
    <property type="project" value="UniProtKB-UniRule"/>
</dbReference>
<dbReference type="CDD" id="cd00390">
    <property type="entry name" value="Urease_gamma"/>
    <property type="match status" value="1"/>
</dbReference>
<dbReference type="Gene3D" id="3.30.280.10">
    <property type="entry name" value="Urease, gamma-like subunit"/>
    <property type="match status" value="1"/>
</dbReference>
<dbReference type="HAMAP" id="MF_00739">
    <property type="entry name" value="Urease_gamma"/>
    <property type="match status" value="1"/>
</dbReference>
<dbReference type="InterPro" id="IPR012010">
    <property type="entry name" value="Urease_gamma"/>
</dbReference>
<dbReference type="InterPro" id="IPR002026">
    <property type="entry name" value="Urease_gamma/gamma-beta_su"/>
</dbReference>
<dbReference type="InterPro" id="IPR036463">
    <property type="entry name" value="Urease_gamma_sf"/>
</dbReference>
<dbReference type="InterPro" id="IPR050069">
    <property type="entry name" value="Urease_subunit"/>
</dbReference>
<dbReference type="NCBIfam" id="NF009712">
    <property type="entry name" value="PRK13241.1"/>
    <property type="match status" value="1"/>
</dbReference>
<dbReference type="NCBIfam" id="TIGR00193">
    <property type="entry name" value="urease_gam"/>
    <property type="match status" value="1"/>
</dbReference>
<dbReference type="PANTHER" id="PTHR33569">
    <property type="entry name" value="UREASE"/>
    <property type="match status" value="1"/>
</dbReference>
<dbReference type="PANTHER" id="PTHR33569:SF1">
    <property type="entry name" value="UREASE"/>
    <property type="match status" value="1"/>
</dbReference>
<dbReference type="Pfam" id="PF00547">
    <property type="entry name" value="Urease_gamma"/>
    <property type="match status" value="1"/>
</dbReference>
<dbReference type="PIRSF" id="PIRSF001223">
    <property type="entry name" value="Urease_gamma"/>
    <property type="match status" value="1"/>
</dbReference>
<dbReference type="SUPFAM" id="SSF54111">
    <property type="entry name" value="Urease, gamma-subunit"/>
    <property type="match status" value="1"/>
</dbReference>